<reference key="1">
    <citation type="journal article" date="2004" name="Nat. Genet.">
        <title>Evidence in the Legionella pneumophila genome for exploitation of host cell functions and high genome plasticity.</title>
        <authorList>
            <person name="Cazalet C."/>
            <person name="Rusniok C."/>
            <person name="Brueggemann H."/>
            <person name="Zidane N."/>
            <person name="Magnier A."/>
            <person name="Ma L."/>
            <person name="Tichit M."/>
            <person name="Jarraud S."/>
            <person name="Bouchier C."/>
            <person name="Vandenesch F."/>
            <person name="Kunst F."/>
            <person name="Etienne J."/>
            <person name="Glaser P."/>
            <person name="Buchrieser C."/>
        </authorList>
    </citation>
    <scope>NUCLEOTIDE SEQUENCE [LARGE SCALE GENOMIC DNA]</scope>
    <source>
        <strain>Lens</strain>
    </source>
</reference>
<feature type="chain" id="PRO_1000058008" description="Phosphoglycerate kinase">
    <location>
        <begin position="1"/>
        <end position="396"/>
    </location>
</feature>
<feature type="binding site" evidence="1">
    <location>
        <begin position="21"/>
        <end position="23"/>
    </location>
    <ligand>
        <name>substrate</name>
    </ligand>
</feature>
<feature type="binding site" evidence="1">
    <location>
        <position position="36"/>
    </location>
    <ligand>
        <name>substrate</name>
    </ligand>
</feature>
<feature type="binding site" evidence="1">
    <location>
        <begin position="59"/>
        <end position="62"/>
    </location>
    <ligand>
        <name>substrate</name>
    </ligand>
</feature>
<feature type="binding site" evidence="1">
    <location>
        <position position="113"/>
    </location>
    <ligand>
        <name>substrate</name>
    </ligand>
</feature>
<feature type="binding site" evidence="1">
    <location>
        <position position="146"/>
    </location>
    <ligand>
        <name>substrate</name>
    </ligand>
</feature>
<feature type="binding site" evidence="1">
    <location>
        <position position="197"/>
    </location>
    <ligand>
        <name>ATP</name>
        <dbReference type="ChEBI" id="CHEBI:30616"/>
    </ligand>
</feature>
<feature type="binding site" evidence="1">
    <location>
        <position position="319"/>
    </location>
    <ligand>
        <name>ATP</name>
        <dbReference type="ChEBI" id="CHEBI:30616"/>
    </ligand>
</feature>
<feature type="binding site" evidence="1">
    <location>
        <begin position="345"/>
        <end position="348"/>
    </location>
    <ligand>
        <name>ATP</name>
        <dbReference type="ChEBI" id="CHEBI:30616"/>
    </ligand>
</feature>
<comment type="catalytic activity">
    <reaction evidence="1">
        <text>(2R)-3-phosphoglycerate + ATP = (2R)-3-phospho-glyceroyl phosphate + ADP</text>
        <dbReference type="Rhea" id="RHEA:14801"/>
        <dbReference type="ChEBI" id="CHEBI:30616"/>
        <dbReference type="ChEBI" id="CHEBI:57604"/>
        <dbReference type="ChEBI" id="CHEBI:58272"/>
        <dbReference type="ChEBI" id="CHEBI:456216"/>
        <dbReference type="EC" id="2.7.2.3"/>
    </reaction>
</comment>
<comment type="pathway">
    <text evidence="1">Carbohydrate degradation; glycolysis; pyruvate from D-glyceraldehyde 3-phosphate: step 2/5.</text>
</comment>
<comment type="subunit">
    <text evidence="1">Monomer.</text>
</comment>
<comment type="subcellular location">
    <subcellularLocation>
        <location evidence="1">Cytoplasm</location>
    </subcellularLocation>
</comment>
<comment type="similarity">
    <text evidence="1">Belongs to the phosphoglycerate kinase family.</text>
</comment>
<organism>
    <name type="scientific">Legionella pneumophila (strain Lens)</name>
    <dbReference type="NCBI Taxonomy" id="297245"/>
    <lineage>
        <taxon>Bacteria</taxon>
        <taxon>Pseudomonadati</taxon>
        <taxon>Pseudomonadota</taxon>
        <taxon>Gammaproteobacteria</taxon>
        <taxon>Legionellales</taxon>
        <taxon>Legionellaceae</taxon>
        <taxon>Legionella</taxon>
    </lineage>
</organism>
<gene>
    <name evidence="1" type="primary">pgk</name>
    <name type="ordered locus">lpl0137</name>
</gene>
<accession>Q5X084</accession>
<keyword id="KW-0067">ATP-binding</keyword>
<keyword id="KW-0963">Cytoplasm</keyword>
<keyword id="KW-0324">Glycolysis</keyword>
<keyword id="KW-0418">Kinase</keyword>
<keyword id="KW-0547">Nucleotide-binding</keyword>
<keyword id="KW-0808">Transferase</keyword>
<dbReference type="EC" id="2.7.2.3" evidence="1"/>
<dbReference type="EMBL" id="CR628337">
    <property type="protein sequence ID" value="CAH14367.1"/>
    <property type="molecule type" value="Genomic_DNA"/>
</dbReference>
<dbReference type="RefSeq" id="WP_011214417.1">
    <property type="nucleotide sequence ID" value="NC_006369.1"/>
</dbReference>
<dbReference type="SMR" id="Q5X084"/>
<dbReference type="KEGG" id="lpf:lpl0137"/>
<dbReference type="LegioList" id="lpl0137"/>
<dbReference type="HOGENOM" id="CLU_025427_0_2_6"/>
<dbReference type="UniPathway" id="UPA00109">
    <property type="reaction ID" value="UER00185"/>
</dbReference>
<dbReference type="Proteomes" id="UP000002517">
    <property type="component" value="Chromosome"/>
</dbReference>
<dbReference type="GO" id="GO:0005829">
    <property type="term" value="C:cytosol"/>
    <property type="evidence" value="ECO:0007669"/>
    <property type="project" value="TreeGrafter"/>
</dbReference>
<dbReference type="GO" id="GO:0043531">
    <property type="term" value="F:ADP binding"/>
    <property type="evidence" value="ECO:0007669"/>
    <property type="project" value="TreeGrafter"/>
</dbReference>
<dbReference type="GO" id="GO:0005524">
    <property type="term" value="F:ATP binding"/>
    <property type="evidence" value="ECO:0007669"/>
    <property type="project" value="UniProtKB-KW"/>
</dbReference>
<dbReference type="GO" id="GO:0004618">
    <property type="term" value="F:phosphoglycerate kinase activity"/>
    <property type="evidence" value="ECO:0007669"/>
    <property type="project" value="UniProtKB-UniRule"/>
</dbReference>
<dbReference type="GO" id="GO:0006094">
    <property type="term" value="P:gluconeogenesis"/>
    <property type="evidence" value="ECO:0007669"/>
    <property type="project" value="TreeGrafter"/>
</dbReference>
<dbReference type="GO" id="GO:0006096">
    <property type="term" value="P:glycolytic process"/>
    <property type="evidence" value="ECO:0007669"/>
    <property type="project" value="UniProtKB-UniRule"/>
</dbReference>
<dbReference type="FunFam" id="3.40.50.1260:FF:000001">
    <property type="entry name" value="Phosphoglycerate kinase"/>
    <property type="match status" value="1"/>
</dbReference>
<dbReference type="FunFam" id="3.40.50.1260:FF:000002">
    <property type="entry name" value="Phosphoglycerate kinase"/>
    <property type="match status" value="1"/>
</dbReference>
<dbReference type="Gene3D" id="3.40.50.1260">
    <property type="entry name" value="Phosphoglycerate kinase, N-terminal domain"/>
    <property type="match status" value="2"/>
</dbReference>
<dbReference type="HAMAP" id="MF_00145">
    <property type="entry name" value="Phosphoglyc_kinase"/>
    <property type="match status" value="1"/>
</dbReference>
<dbReference type="InterPro" id="IPR001576">
    <property type="entry name" value="Phosphoglycerate_kinase"/>
</dbReference>
<dbReference type="InterPro" id="IPR015911">
    <property type="entry name" value="Phosphoglycerate_kinase_CS"/>
</dbReference>
<dbReference type="InterPro" id="IPR015824">
    <property type="entry name" value="Phosphoglycerate_kinase_N"/>
</dbReference>
<dbReference type="InterPro" id="IPR036043">
    <property type="entry name" value="Phosphoglycerate_kinase_sf"/>
</dbReference>
<dbReference type="PANTHER" id="PTHR11406">
    <property type="entry name" value="PHOSPHOGLYCERATE KINASE"/>
    <property type="match status" value="1"/>
</dbReference>
<dbReference type="PANTHER" id="PTHR11406:SF23">
    <property type="entry name" value="PHOSPHOGLYCERATE KINASE 1, CHLOROPLASTIC-RELATED"/>
    <property type="match status" value="1"/>
</dbReference>
<dbReference type="Pfam" id="PF00162">
    <property type="entry name" value="PGK"/>
    <property type="match status" value="1"/>
</dbReference>
<dbReference type="PIRSF" id="PIRSF000724">
    <property type="entry name" value="Pgk"/>
    <property type="match status" value="1"/>
</dbReference>
<dbReference type="PRINTS" id="PR00477">
    <property type="entry name" value="PHGLYCKINASE"/>
</dbReference>
<dbReference type="SUPFAM" id="SSF53748">
    <property type="entry name" value="Phosphoglycerate kinase"/>
    <property type="match status" value="1"/>
</dbReference>
<dbReference type="PROSITE" id="PS00111">
    <property type="entry name" value="PGLYCERATE_KINASE"/>
    <property type="match status" value="1"/>
</dbReference>
<evidence type="ECO:0000255" key="1">
    <source>
        <dbReference type="HAMAP-Rule" id="MF_00145"/>
    </source>
</evidence>
<sequence>MNLIKMSDIDLSGKRVLIREDLNVPIKDGMITSDQRLQAALPTIKSALDSGAAVIVLSHLGRPEEGKYEKKFSLEPVADYLRKNLEYPVRFVKDYLSGVDVNPGELAVCENVRFNPGEKSNDESLAKKLANLCDVFVMDAFGTAHRAQASTYGVAQYAPVAVSGPLLIRELEALNQVLKAPKKPIVAIVGGAKVSSKLSLLKQLVGMVDVLIPGGGIANTFLKAQGFEIGISLYEPDLLDEARHILILAKEKGCQIPLPTDVVVGKTFSETCPAFNKSLSNVAADDMILDIGPETIRDYVDLIHEANTIIWNGPVGVFEFPQFAYGTRAIAIAIAESNAFSIAGGGDTLAAVDLYDLNQQISYISTGGGAFLECLEGKTLPAVAILQERAKHVKTN</sequence>
<proteinExistence type="inferred from homology"/>
<name>PGK_LEGPL</name>
<protein>
    <recommendedName>
        <fullName evidence="1">Phosphoglycerate kinase</fullName>
        <ecNumber evidence="1">2.7.2.3</ecNumber>
    </recommendedName>
</protein>